<keyword id="KW-0997">Cell inner membrane</keyword>
<keyword id="KW-1003">Cell membrane</keyword>
<keyword id="KW-0143">Chaperone</keyword>
<keyword id="KW-0472">Membrane</keyword>
<keyword id="KW-0653">Protein transport</keyword>
<keyword id="KW-0812">Transmembrane</keyword>
<keyword id="KW-1133">Transmembrane helix</keyword>
<keyword id="KW-0813">Transport</keyword>
<comment type="function">
    <text evidence="1">Required for the insertion and/or proper folding and/or complex formation of integral membrane proteins into the membrane. Involved in integration of membrane proteins that insert both dependently and independently of the Sec translocase complex, as well as at least some lipoproteins. Aids folding of multispanning membrane proteins.</text>
</comment>
<comment type="subunit">
    <text evidence="1">Interacts with the Sec translocase complex via SecD. Specifically interacts with transmembrane segments of nascent integral membrane proteins during membrane integration.</text>
</comment>
<comment type="subcellular location">
    <subcellularLocation>
        <location evidence="1">Cell inner membrane</location>
        <topology evidence="1">Multi-pass membrane protein</topology>
    </subcellularLocation>
</comment>
<comment type="similarity">
    <text evidence="1">Belongs to the OXA1/ALB3/YidC family. Type 1 subfamily.</text>
</comment>
<evidence type="ECO:0000255" key="1">
    <source>
        <dbReference type="HAMAP-Rule" id="MF_01810"/>
    </source>
</evidence>
<protein>
    <recommendedName>
        <fullName evidence="1">Membrane protein insertase YidC</fullName>
    </recommendedName>
    <alternativeName>
        <fullName evidence="1">Foldase YidC</fullName>
    </alternativeName>
    <alternativeName>
        <fullName evidence="1">Membrane integrase YidC</fullName>
    </alternativeName>
    <alternativeName>
        <fullName evidence="1">Membrane protein YidC</fullName>
    </alternativeName>
</protein>
<feature type="chain" id="PRO_1000187641" description="Membrane protein insertase YidC">
    <location>
        <begin position="1"/>
        <end position="552"/>
    </location>
</feature>
<feature type="transmembrane region" description="Helical" evidence="1">
    <location>
        <begin position="7"/>
        <end position="24"/>
    </location>
</feature>
<feature type="transmembrane region" description="Helical" evidence="1">
    <location>
        <begin position="364"/>
        <end position="384"/>
    </location>
</feature>
<feature type="transmembrane region" description="Helical" evidence="1">
    <location>
        <begin position="434"/>
        <end position="454"/>
    </location>
</feature>
<feature type="transmembrane region" description="Helical" evidence="1">
    <location>
        <begin position="473"/>
        <end position="493"/>
    </location>
</feature>
<feature type="transmembrane region" description="Helical" evidence="1">
    <location>
        <begin position="508"/>
        <end position="528"/>
    </location>
</feature>
<organism>
    <name type="scientific">Burkholderia cenocepacia (strain ATCC BAA-245 / DSM 16553 / LMG 16656 / NCTC 13227 / J2315 / CF5610)</name>
    <name type="common">Burkholderia cepacia (strain J2315)</name>
    <dbReference type="NCBI Taxonomy" id="216591"/>
    <lineage>
        <taxon>Bacteria</taxon>
        <taxon>Pseudomonadati</taxon>
        <taxon>Pseudomonadota</taxon>
        <taxon>Betaproteobacteria</taxon>
        <taxon>Burkholderiales</taxon>
        <taxon>Burkholderiaceae</taxon>
        <taxon>Burkholderia</taxon>
        <taxon>Burkholderia cepacia complex</taxon>
    </lineage>
</organism>
<dbReference type="EMBL" id="AM747720">
    <property type="protein sequence ID" value="CAR50738.1"/>
    <property type="molecule type" value="Genomic_DNA"/>
</dbReference>
<dbReference type="RefSeq" id="WP_006489931.1">
    <property type="nucleotide sequence ID" value="NC_011000.1"/>
</dbReference>
<dbReference type="SMR" id="B4E7D5"/>
<dbReference type="KEGG" id="bcj:BCAL0426"/>
<dbReference type="eggNOG" id="COG0706">
    <property type="taxonomic scope" value="Bacteria"/>
</dbReference>
<dbReference type="HOGENOM" id="CLU_016535_3_0_4"/>
<dbReference type="BioCyc" id="BCEN216591:G1G1V-492-MONOMER"/>
<dbReference type="Proteomes" id="UP000001035">
    <property type="component" value="Chromosome 1"/>
</dbReference>
<dbReference type="GO" id="GO:0005886">
    <property type="term" value="C:plasma membrane"/>
    <property type="evidence" value="ECO:0007669"/>
    <property type="project" value="UniProtKB-SubCell"/>
</dbReference>
<dbReference type="GO" id="GO:0032977">
    <property type="term" value="F:membrane insertase activity"/>
    <property type="evidence" value="ECO:0007669"/>
    <property type="project" value="InterPro"/>
</dbReference>
<dbReference type="GO" id="GO:0051205">
    <property type="term" value="P:protein insertion into membrane"/>
    <property type="evidence" value="ECO:0007669"/>
    <property type="project" value="TreeGrafter"/>
</dbReference>
<dbReference type="GO" id="GO:0015031">
    <property type="term" value="P:protein transport"/>
    <property type="evidence" value="ECO:0007669"/>
    <property type="project" value="UniProtKB-KW"/>
</dbReference>
<dbReference type="CDD" id="cd20070">
    <property type="entry name" value="5TM_YidC_Alb3"/>
    <property type="match status" value="1"/>
</dbReference>
<dbReference type="CDD" id="cd19961">
    <property type="entry name" value="EcYidC-like_peri"/>
    <property type="match status" value="1"/>
</dbReference>
<dbReference type="Gene3D" id="2.70.98.90">
    <property type="match status" value="1"/>
</dbReference>
<dbReference type="HAMAP" id="MF_01810">
    <property type="entry name" value="YidC_type1"/>
    <property type="match status" value="1"/>
</dbReference>
<dbReference type="InterPro" id="IPR019998">
    <property type="entry name" value="Membr_insert_YidC"/>
</dbReference>
<dbReference type="InterPro" id="IPR028053">
    <property type="entry name" value="Membr_insert_YidC_N"/>
</dbReference>
<dbReference type="InterPro" id="IPR001708">
    <property type="entry name" value="YidC/ALB3/OXA1/COX18"/>
</dbReference>
<dbReference type="InterPro" id="IPR028055">
    <property type="entry name" value="YidC/Oxa/ALB_C"/>
</dbReference>
<dbReference type="InterPro" id="IPR047196">
    <property type="entry name" value="YidC_ALB_C"/>
</dbReference>
<dbReference type="InterPro" id="IPR038221">
    <property type="entry name" value="YidC_periplasmic_sf"/>
</dbReference>
<dbReference type="NCBIfam" id="NF002352">
    <property type="entry name" value="PRK01318.1-3"/>
    <property type="match status" value="1"/>
</dbReference>
<dbReference type="NCBIfam" id="NF002353">
    <property type="entry name" value="PRK01318.1-4"/>
    <property type="match status" value="1"/>
</dbReference>
<dbReference type="NCBIfam" id="TIGR03593">
    <property type="entry name" value="yidC_nterm"/>
    <property type="match status" value="1"/>
</dbReference>
<dbReference type="NCBIfam" id="TIGR03592">
    <property type="entry name" value="yidC_oxa1_cterm"/>
    <property type="match status" value="1"/>
</dbReference>
<dbReference type="PANTHER" id="PTHR12428:SF65">
    <property type="entry name" value="CYTOCHROME C OXIDASE ASSEMBLY PROTEIN COX18, MITOCHONDRIAL"/>
    <property type="match status" value="1"/>
</dbReference>
<dbReference type="PANTHER" id="PTHR12428">
    <property type="entry name" value="OXA1"/>
    <property type="match status" value="1"/>
</dbReference>
<dbReference type="Pfam" id="PF02096">
    <property type="entry name" value="60KD_IMP"/>
    <property type="match status" value="1"/>
</dbReference>
<dbReference type="Pfam" id="PF14849">
    <property type="entry name" value="YidC_periplas"/>
    <property type="match status" value="1"/>
</dbReference>
<dbReference type="PRINTS" id="PR00701">
    <property type="entry name" value="60KDINNERMP"/>
</dbReference>
<dbReference type="PRINTS" id="PR01900">
    <property type="entry name" value="YIDCPROTEIN"/>
</dbReference>
<name>YIDC_BURCJ</name>
<gene>
    <name evidence="1" type="primary">yidC</name>
    <name type="ordered locus">BceJ2315_04250</name>
    <name type="ORF">BCAL0426</name>
</gene>
<proteinExistence type="inferred from homology"/>
<reference key="1">
    <citation type="journal article" date="2009" name="J. Bacteriol.">
        <title>The genome of Burkholderia cenocepacia J2315, an epidemic pathogen of cystic fibrosis patients.</title>
        <authorList>
            <person name="Holden M.T."/>
            <person name="Seth-Smith H.M."/>
            <person name="Crossman L.C."/>
            <person name="Sebaihia M."/>
            <person name="Bentley S.D."/>
            <person name="Cerdeno-Tarraga A.M."/>
            <person name="Thomson N.R."/>
            <person name="Bason N."/>
            <person name="Quail M.A."/>
            <person name="Sharp S."/>
            <person name="Cherevach I."/>
            <person name="Churcher C."/>
            <person name="Goodhead I."/>
            <person name="Hauser H."/>
            <person name="Holroyd N."/>
            <person name="Mungall K."/>
            <person name="Scott P."/>
            <person name="Walker D."/>
            <person name="White B."/>
            <person name="Rose H."/>
            <person name="Iversen P."/>
            <person name="Mil-Homens D."/>
            <person name="Rocha E.P."/>
            <person name="Fialho A.M."/>
            <person name="Baldwin A."/>
            <person name="Dowson C."/>
            <person name="Barrell B.G."/>
            <person name="Govan J.R."/>
            <person name="Vandamme P."/>
            <person name="Hart C.A."/>
            <person name="Mahenthiralingam E."/>
            <person name="Parkhill J."/>
        </authorList>
    </citation>
    <scope>NUCLEOTIDE SEQUENCE [LARGE SCALE GENOMIC DNA]</scope>
    <source>
        <strain>ATCC BAA-245 / DSM 16553 / LMG 16656 / NCTC 13227 / J2315 / CF5610</strain>
    </source>
</reference>
<sequence length="552" mass="60796">MDIKRTVLWVIFFMSAVMLYDNWQRDHGRPSMFFPSATHTAPAAAGGASGTGATTAGDVPAAAAGAAPSTTAPAAQAQLVKFSTDVYDGEIDTRGGTLAKLTLKKQGDGKQPDLYITLFDHTAGHTYLARTGLLGGDFPNHNDVYTQLNPGSTSLTGDQNTLKLSFESPVKGGVKVVKTYTFTRGSYVIGVDTKIDNVGTAPVTPTVYMELVRDNTAVETPMFSHTFLGPAVYTDAKHFQKIDFSDLDKNKANFEKSADNGWVAMVQHYFASAWIPQQGAKRDIYAEKIDPALYRVGVKQPVAAIAPGQSADVQARLFAGPEEERMLEGIAPGLELVKDYGWVTIIAKPLFWLLEKIHGYVGNWGWAIVLLTVLIKAVFFPLSAASYKSMARMKEITPRMQALRERFKSDPQKMNAALMELYKTEKVNPFGGCLPVVIQIPVFISLYWVLLASVEMRGAPWILWIHDLSQRDPFFILPVLMAVSMFVQTSLNPTPPDPVQAKMMKFMPIAFSVMFFFFPAGLVLYYVVNNVLSIAQQYYITRKLGGVKKKPA</sequence>
<accession>B4E7D5</accession>